<gene>
    <name evidence="1" type="primary">rsd</name>
    <name type="ordered locus">SeD_A4572</name>
</gene>
<protein>
    <recommendedName>
        <fullName evidence="1">Regulator of sigma D</fullName>
    </recommendedName>
</protein>
<evidence type="ECO:0000255" key="1">
    <source>
        <dbReference type="HAMAP-Rule" id="MF_01181"/>
    </source>
</evidence>
<comment type="function">
    <text evidence="1">Binds RpoD and negatively regulates RpoD-mediated transcription activation by preventing the interaction between the primary sigma factor RpoD with the catalytic core of the RNA polymerase and with promoter DNA. May be involved in replacement of the RNA polymerase sigma subunit from RpoD to RpoS during the transition from exponential growth to the stationary phase.</text>
</comment>
<comment type="subunit">
    <text evidence="1">Interacts with RpoD.</text>
</comment>
<comment type="subcellular location">
    <subcellularLocation>
        <location evidence="1">Cytoplasm</location>
    </subcellularLocation>
</comment>
<comment type="similarity">
    <text evidence="1">Belongs to the Rsd/AlgQ family.</text>
</comment>
<keyword id="KW-0963">Cytoplasm</keyword>
<keyword id="KW-0804">Transcription</keyword>
<keyword id="KW-0805">Transcription regulation</keyword>
<sequence>MLNQLENLTERVGGSNKLVDRWLDVRKHLLVAYYNLVGIKPGKESYMRLNEKALDDFCQSLVDYLSAGHFSIYERILHKLEGNGQLLHAAKIWPLLEDNTQRIMDYYDTSLETAIDHDNCLEFQQALSDIGEALEARFVLEDKLIMLVFDAMHDGARVKRPA</sequence>
<accession>B5FQL0</accession>
<proteinExistence type="inferred from homology"/>
<reference key="1">
    <citation type="journal article" date="2011" name="J. Bacteriol.">
        <title>Comparative genomics of 28 Salmonella enterica isolates: evidence for CRISPR-mediated adaptive sublineage evolution.</title>
        <authorList>
            <person name="Fricke W.F."/>
            <person name="Mammel M.K."/>
            <person name="McDermott P.F."/>
            <person name="Tartera C."/>
            <person name="White D.G."/>
            <person name="Leclerc J.E."/>
            <person name="Ravel J."/>
            <person name="Cebula T.A."/>
        </authorList>
    </citation>
    <scope>NUCLEOTIDE SEQUENCE [LARGE SCALE GENOMIC DNA]</scope>
    <source>
        <strain>CT_02021853</strain>
    </source>
</reference>
<name>RSD_SALDC</name>
<organism>
    <name type="scientific">Salmonella dublin (strain CT_02021853)</name>
    <dbReference type="NCBI Taxonomy" id="439851"/>
    <lineage>
        <taxon>Bacteria</taxon>
        <taxon>Pseudomonadati</taxon>
        <taxon>Pseudomonadota</taxon>
        <taxon>Gammaproteobacteria</taxon>
        <taxon>Enterobacterales</taxon>
        <taxon>Enterobacteriaceae</taxon>
        <taxon>Salmonella</taxon>
    </lineage>
</organism>
<dbReference type="EMBL" id="CP001144">
    <property type="protein sequence ID" value="ACH77022.1"/>
    <property type="molecule type" value="Genomic_DNA"/>
</dbReference>
<dbReference type="RefSeq" id="WP_000934315.1">
    <property type="nucleotide sequence ID" value="NC_011205.1"/>
</dbReference>
<dbReference type="SMR" id="B5FQL0"/>
<dbReference type="KEGG" id="sed:SeD_A4572"/>
<dbReference type="HOGENOM" id="CLU_142729_0_0_6"/>
<dbReference type="Proteomes" id="UP000008322">
    <property type="component" value="Chromosome"/>
</dbReference>
<dbReference type="GO" id="GO:0005737">
    <property type="term" value="C:cytoplasm"/>
    <property type="evidence" value="ECO:0007669"/>
    <property type="project" value="UniProtKB-SubCell"/>
</dbReference>
<dbReference type="GO" id="GO:0006355">
    <property type="term" value="P:regulation of DNA-templated transcription"/>
    <property type="evidence" value="ECO:0007669"/>
    <property type="project" value="InterPro"/>
</dbReference>
<dbReference type="FunFam" id="1.20.120.1370:FF:000001">
    <property type="entry name" value="Regulator of sigma D"/>
    <property type="match status" value="1"/>
</dbReference>
<dbReference type="Gene3D" id="1.20.120.1370">
    <property type="entry name" value="Regulator of RNA polymerase sigma(70) subunit, domain 4"/>
    <property type="match status" value="1"/>
</dbReference>
<dbReference type="HAMAP" id="MF_01181">
    <property type="entry name" value="Rsd"/>
    <property type="match status" value="1"/>
</dbReference>
<dbReference type="InterPro" id="IPR038309">
    <property type="entry name" value="Rsd/AlgQ_sf"/>
</dbReference>
<dbReference type="InterPro" id="IPR023785">
    <property type="entry name" value="Sigma70_reg_Rsd"/>
</dbReference>
<dbReference type="InterPro" id="IPR007448">
    <property type="entry name" value="Sigma70_reg_Rsd_AlgQ"/>
</dbReference>
<dbReference type="NCBIfam" id="NF008723">
    <property type="entry name" value="PRK11718.1"/>
    <property type="match status" value="1"/>
</dbReference>
<dbReference type="Pfam" id="PF04353">
    <property type="entry name" value="Rsd_AlgQ"/>
    <property type="match status" value="1"/>
</dbReference>
<dbReference type="PIRSF" id="PIRSF016548">
    <property type="entry name" value="Rsd_AlgQ"/>
    <property type="match status" value="1"/>
</dbReference>
<feature type="chain" id="PRO_1000138198" description="Regulator of sigma D">
    <location>
        <begin position="1"/>
        <end position="162"/>
    </location>
</feature>